<comment type="function">
    <text evidence="1">Condenses 4-methyl-5-(beta-hydroxyethyl)thiazole monophosphate (THZ-P) and 2-methyl-4-amino-5-hydroxymethyl pyrimidine pyrophosphate (HMP-PP) to form thiamine monophosphate (TMP).</text>
</comment>
<comment type="catalytic activity">
    <reaction evidence="1">
        <text>2-[(2R,5Z)-2-carboxy-4-methylthiazol-5(2H)-ylidene]ethyl phosphate + 4-amino-2-methyl-5-(diphosphooxymethyl)pyrimidine + 2 H(+) = thiamine phosphate + CO2 + diphosphate</text>
        <dbReference type="Rhea" id="RHEA:47844"/>
        <dbReference type="ChEBI" id="CHEBI:15378"/>
        <dbReference type="ChEBI" id="CHEBI:16526"/>
        <dbReference type="ChEBI" id="CHEBI:33019"/>
        <dbReference type="ChEBI" id="CHEBI:37575"/>
        <dbReference type="ChEBI" id="CHEBI:57841"/>
        <dbReference type="ChEBI" id="CHEBI:62899"/>
        <dbReference type="EC" id="2.5.1.3"/>
    </reaction>
</comment>
<comment type="catalytic activity">
    <reaction evidence="1">
        <text>2-(2-carboxy-4-methylthiazol-5-yl)ethyl phosphate + 4-amino-2-methyl-5-(diphosphooxymethyl)pyrimidine + 2 H(+) = thiamine phosphate + CO2 + diphosphate</text>
        <dbReference type="Rhea" id="RHEA:47848"/>
        <dbReference type="ChEBI" id="CHEBI:15378"/>
        <dbReference type="ChEBI" id="CHEBI:16526"/>
        <dbReference type="ChEBI" id="CHEBI:33019"/>
        <dbReference type="ChEBI" id="CHEBI:37575"/>
        <dbReference type="ChEBI" id="CHEBI:57841"/>
        <dbReference type="ChEBI" id="CHEBI:62890"/>
        <dbReference type="EC" id="2.5.1.3"/>
    </reaction>
</comment>
<comment type="catalytic activity">
    <reaction evidence="1">
        <text>4-methyl-5-(2-phosphooxyethyl)-thiazole + 4-amino-2-methyl-5-(diphosphooxymethyl)pyrimidine + H(+) = thiamine phosphate + diphosphate</text>
        <dbReference type="Rhea" id="RHEA:22328"/>
        <dbReference type="ChEBI" id="CHEBI:15378"/>
        <dbReference type="ChEBI" id="CHEBI:33019"/>
        <dbReference type="ChEBI" id="CHEBI:37575"/>
        <dbReference type="ChEBI" id="CHEBI:57841"/>
        <dbReference type="ChEBI" id="CHEBI:58296"/>
        <dbReference type="EC" id="2.5.1.3"/>
    </reaction>
</comment>
<comment type="cofactor">
    <cofactor evidence="1">
        <name>Mg(2+)</name>
        <dbReference type="ChEBI" id="CHEBI:18420"/>
    </cofactor>
    <text evidence="1">Binds 1 Mg(2+) ion per subunit.</text>
</comment>
<comment type="pathway">
    <text evidence="1">Cofactor biosynthesis; thiamine diphosphate biosynthesis; thiamine phosphate from 4-amino-2-methyl-5-diphosphomethylpyrimidine and 4-methyl-5-(2-phosphoethyl)-thiazole: step 1/1.</text>
</comment>
<comment type="similarity">
    <text evidence="1">Belongs to the thiamine-phosphate synthase family.</text>
</comment>
<name>THIE_SALAI</name>
<protein>
    <recommendedName>
        <fullName evidence="1">Thiamine-phosphate synthase</fullName>
        <shortName evidence="1">TP synthase</shortName>
        <shortName evidence="1">TPS</shortName>
        <ecNumber evidence="1">2.5.1.3</ecNumber>
    </recommendedName>
    <alternativeName>
        <fullName evidence="1">Thiamine-phosphate pyrophosphorylase</fullName>
        <shortName evidence="1">TMP pyrophosphorylase</shortName>
        <shortName evidence="1">TMP-PPase</shortName>
    </alternativeName>
</protein>
<gene>
    <name evidence="1" type="primary">thiE</name>
    <name type="ordered locus">Sare_4280</name>
</gene>
<keyword id="KW-0460">Magnesium</keyword>
<keyword id="KW-0479">Metal-binding</keyword>
<keyword id="KW-0784">Thiamine biosynthesis</keyword>
<keyword id="KW-0808">Transferase</keyword>
<sequence length="208" mass="20611">MSSLGRLHLITDNRPGQDPLAVVRAALSVARAELVVQVRVTDETTDRQAYDLARRVTVLCARYGATCLVNDRLHVALAVGADGGHVGADDLPVGAARAVLGSAAVLGATAREADTAVEAVAAGASYLGVGSVHPTTSKDGLPPPIGAAGLRAVAAAVSVPVIAIGGVTAADVPDLRAAGAYGVAVIAALSHAADPARATAAFVEALTC</sequence>
<dbReference type="EC" id="2.5.1.3" evidence="1"/>
<dbReference type="EMBL" id="CP000850">
    <property type="protein sequence ID" value="ABW00062.1"/>
    <property type="molecule type" value="Genomic_DNA"/>
</dbReference>
<dbReference type="SMR" id="A8M4E6"/>
<dbReference type="STRING" id="391037.Sare_4280"/>
<dbReference type="KEGG" id="saq:Sare_4280"/>
<dbReference type="PATRIC" id="fig|391037.6.peg.4321"/>
<dbReference type="eggNOG" id="COG0352">
    <property type="taxonomic scope" value="Bacteria"/>
</dbReference>
<dbReference type="HOGENOM" id="CLU_018272_3_4_11"/>
<dbReference type="OrthoDB" id="3243336at2"/>
<dbReference type="UniPathway" id="UPA00060">
    <property type="reaction ID" value="UER00141"/>
</dbReference>
<dbReference type="GO" id="GO:0005737">
    <property type="term" value="C:cytoplasm"/>
    <property type="evidence" value="ECO:0007669"/>
    <property type="project" value="TreeGrafter"/>
</dbReference>
<dbReference type="GO" id="GO:0000287">
    <property type="term" value="F:magnesium ion binding"/>
    <property type="evidence" value="ECO:0007669"/>
    <property type="project" value="UniProtKB-UniRule"/>
</dbReference>
<dbReference type="GO" id="GO:0004789">
    <property type="term" value="F:thiamine-phosphate diphosphorylase activity"/>
    <property type="evidence" value="ECO:0007669"/>
    <property type="project" value="UniProtKB-UniRule"/>
</dbReference>
<dbReference type="GO" id="GO:0009228">
    <property type="term" value="P:thiamine biosynthetic process"/>
    <property type="evidence" value="ECO:0007669"/>
    <property type="project" value="UniProtKB-KW"/>
</dbReference>
<dbReference type="GO" id="GO:0009229">
    <property type="term" value="P:thiamine diphosphate biosynthetic process"/>
    <property type="evidence" value="ECO:0007669"/>
    <property type="project" value="UniProtKB-UniRule"/>
</dbReference>
<dbReference type="CDD" id="cd00564">
    <property type="entry name" value="TMP_TenI"/>
    <property type="match status" value="1"/>
</dbReference>
<dbReference type="Gene3D" id="3.20.20.70">
    <property type="entry name" value="Aldolase class I"/>
    <property type="match status" value="1"/>
</dbReference>
<dbReference type="HAMAP" id="MF_00097">
    <property type="entry name" value="TMP_synthase"/>
    <property type="match status" value="1"/>
</dbReference>
<dbReference type="InterPro" id="IPR013785">
    <property type="entry name" value="Aldolase_TIM"/>
</dbReference>
<dbReference type="InterPro" id="IPR036206">
    <property type="entry name" value="ThiamineP_synth_sf"/>
</dbReference>
<dbReference type="InterPro" id="IPR022998">
    <property type="entry name" value="ThiamineP_synth_TenI"/>
</dbReference>
<dbReference type="InterPro" id="IPR034291">
    <property type="entry name" value="TMP_synthase"/>
</dbReference>
<dbReference type="NCBIfam" id="TIGR00693">
    <property type="entry name" value="thiE"/>
    <property type="match status" value="1"/>
</dbReference>
<dbReference type="PANTHER" id="PTHR20857">
    <property type="entry name" value="THIAMINE-PHOSPHATE PYROPHOSPHORYLASE"/>
    <property type="match status" value="1"/>
</dbReference>
<dbReference type="PANTHER" id="PTHR20857:SF15">
    <property type="entry name" value="THIAMINE-PHOSPHATE SYNTHASE"/>
    <property type="match status" value="1"/>
</dbReference>
<dbReference type="Pfam" id="PF02581">
    <property type="entry name" value="TMP-TENI"/>
    <property type="match status" value="1"/>
</dbReference>
<dbReference type="SUPFAM" id="SSF51391">
    <property type="entry name" value="Thiamin phosphate synthase"/>
    <property type="match status" value="1"/>
</dbReference>
<proteinExistence type="inferred from homology"/>
<reference key="1">
    <citation type="submission" date="2007-10" db="EMBL/GenBank/DDBJ databases">
        <title>Complete sequence of Salinispora arenicola CNS-205.</title>
        <authorList>
            <consortium name="US DOE Joint Genome Institute"/>
            <person name="Copeland A."/>
            <person name="Lucas S."/>
            <person name="Lapidus A."/>
            <person name="Barry K."/>
            <person name="Glavina del Rio T."/>
            <person name="Dalin E."/>
            <person name="Tice H."/>
            <person name="Pitluck S."/>
            <person name="Foster B."/>
            <person name="Schmutz J."/>
            <person name="Larimer F."/>
            <person name="Land M."/>
            <person name="Hauser L."/>
            <person name="Kyrpides N."/>
            <person name="Ivanova N."/>
            <person name="Jensen P.R."/>
            <person name="Moore B.S."/>
            <person name="Penn K."/>
            <person name="Jenkins C."/>
            <person name="Udwary D."/>
            <person name="Xiang L."/>
            <person name="Gontang E."/>
            <person name="Richardson P."/>
        </authorList>
    </citation>
    <scope>NUCLEOTIDE SEQUENCE [LARGE SCALE GENOMIC DNA]</scope>
    <source>
        <strain>CNS-205</strain>
    </source>
</reference>
<feature type="chain" id="PRO_0000336427" description="Thiamine-phosphate synthase">
    <location>
        <begin position="1"/>
        <end position="208"/>
    </location>
</feature>
<feature type="binding site" evidence="1">
    <location>
        <begin position="37"/>
        <end position="39"/>
    </location>
    <ligand>
        <name>4-amino-2-methyl-5-(diphosphooxymethyl)pyrimidine</name>
        <dbReference type="ChEBI" id="CHEBI:57841"/>
    </ligand>
</feature>
<feature type="binding site" evidence="1">
    <location>
        <position position="70"/>
    </location>
    <ligand>
        <name>4-amino-2-methyl-5-(diphosphooxymethyl)pyrimidine</name>
        <dbReference type="ChEBI" id="CHEBI:57841"/>
    </ligand>
</feature>
<feature type="binding site" evidence="1">
    <location>
        <position position="71"/>
    </location>
    <ligand>
        <name>Mg(2+)</name>
        <dbReference type="ChEBI" id="CHEBI:18420"/>
    </ligand>
</feature>
<feature type="binding site" evidence="1">
    <location>
        <position position="90"/>
    </location>
    <ligand>
        <name>Mg(2+)</name>
        <dbReference type="ChEBI" id="CHEBI:18420"/>
    </ligand>
</feature>
<feature type="binding site" evidence="1">
    <location>
        <position position="109"/>
    </location>
    <ligand>
        <name>4-amino-2-methyl-5-(diphosphooxymethyl)pyrimidine</name>
        <dbReference type="ChEBI" id="CHEBI:57841"/>
    </ligand>
</feature>
<feature type="binding site" evidence="1">
    <location>
        <begin position="135"/>
        <end position="137"/>
    </location>
    <ligand>
        <name>2-[(2R,5Z)-2-carboxy-4-methylthiazol-5(2H)-ylidene]ethyl phosphate</name>
        <dbReference type="ChEBI" id="CHEBI:62899"/>
    </ligand>
</feature>
<feature type="binding site" evidence="1">
    <location>
        <position position="138"/>
    </location>
    <ligand>
        <name>4-amino-2-methyl-5-(diphosphooxymethyl)pyrimidine</name>
        <dbReference type="ChEBI" id="CHEBI:57841"/>
    </ligand>
</feature>
<feature type="binding site" evidence="1">
    <location>
        <position position="166"/>
    </location>
    <ligand>
        <name>2-[(2R,5Z)-2-carboxy-4-methylthiazol-5(2H)-ylidene]ethyl phosphate</name>
        <dbReference type="ChEBI" id="CHEBI:62899"/>
    </ligand>
</feature>
<evidence type="ECO:0000255" key="1">
    <source>
        <dbReference type="HAMAP-Rule" id="MF_00097"/>
    </source>
</evidence>
<accession>A8M4E6</accession>
<organism>
    <name type="scientific">Salinispora arenicola (strain CNS-205)</name>
    <dbReference type="NCBI Taxonomy" id="391037"/>
    <lineage>
        <taxon>Bacteria</taxon>
        <taxon>Bacillati</taxon>
        <taxon>Actinomycetota</taxon>
        <taxon>Actinomycetes</taxon>
        <taxon>Micromonosporales</taxon>
        <taxon>Micromonosporaceae</taxon>
        <taxon>Salinispora</taxon>
    </lineage>
</organism>